<name>THIK_SHIDS</name>
<accession>Q32EW6</accession>
<sequence>MPFRSNNPITRDELLSRFFPQFHPVTTFNSGLSGGSFLIEHQGQRFVVRQPHDPDAPQSAFLRQYRALSQLPACIAPKPHLYLRDWMVVDYLPGEVKTYLPDTNELAGLLYYLHQQPRFGWRITLLPLLELYWQQSDPARRTVGWLRMLKRLRKAREPRPLRLSPLHMDVHAGNLVHSVSGLKLIDWEYAGDGDIALELAAVWVENTEQHRQLVNDYATRAKIYPAQLWRQVRRWFPWLLMLKAGWFEYRWRQTGDQQFIRLADDTWRQLLIKQ</sequence>
<organism>
    <name type="scientific">Shigella dysenteriae serotype 1 (strain Sd197)</name>
    <dbReference type="NCBI Taxonomy" id="300267"/>
    <lineage>
        <taxon>Bacteria</taxon>
        <taxon>Pseudomonadati</taxon>
        <taxon>Pseudomonadota</taxon>
        <taxon>Gammaproteobacteria</taxon>
        <taxon>Enterobacterales</taxon>
        <taxon>Enterobacteriaceae</taxon>
        <taxon>Shigella</taxon>
    </lineage>
</organism>
<feature type="chain" id="PRO_0000291000" description="Thiamine kinase">
    <location>
        <begin position="1"/>
        <end position="274"/>
    </location>
</feature>
<protein>
    <recommendedName>
        <fullName evidence="1">Thiamine kinase</fullName>
        <ecNumber evidence="1">2.7.1.89</ecNumber>
    </recommendedName>
</protein>
<keyword id="KW-0067">ATP-binding</keyword>
<keyword id="KW-0418">Kinase</keyword>
<keyword id="KW-0547">Nucleotide-binding</keyword>
<keyword id="KW-1185">Reference proteome</keyword>
<keyword id="KW-0808">Transferase</keyword>
<dbReference type="EC" id="2.7.1.89" evidence="1"/>
<dbReference type="EMBL" id="CP000034">
    <property type="protein sequence ID" value="ABB62139.1"/>
    <property type="molecule type" value="Genomic_DNA"/>
</dbReference>
<dbReference type="RefSeq" id="WP_001116572.1">
    <property type="nucleotide sequence ID" value="NC_007606.1"/>
</dbReference>
<dbReference type="RefSeq" id="YP_403630.1">
    <property type="nucleotide sequence ID" value="NC_007606.1"/>
</dbReference>
<dbReference type="SMR" id="Q32EW6"/>
<dbReference type="STRING" id="300267.SDY_2044"/>
<dbReference type="EnsemblBacteria" id="ABB62139">
    <property type="protein sequence ID" value="ABB62139"/>
    <property type="gene ID" value="SDY_2044"/>
</dbReference>
<dbReference type="KEGG" id="sdy:SDY_2044"/>
<dbReference type="PATRIC" id="fig|300267.13.peg.2458"/>
<dbReference type="HOGENOM" id="CLU_055115_2_1_6"/>
<dbReference type="UniPathway" id="UPA00060">
    <property type="reaction ID" value="UER00596"/>
</dbReference>
<dbReference type="Proteomes" id="UP000002716">
    <property type="component" value="Chromosome"/>
</dbReference>
<dbReference type="GO" id="GO:0005524">
    <property type="term" value="F:ATP binding"/>
    <property type="evidence" value="ECO:0007669"/>
    <property type="project" value="UniProtKB-KW"/>
</dbReference>
<dbReference type="GO" id="GO:0019165">
    <property type="term" value="F:thiamine kinase activity"/>
    <property type="evidence" value="ECO:0007669"/>
    <property type="project" value="UniProtKB-UniRule"/>
</dbReference>
<dbReference type="GO" id="GO:0009229">
    <property type="term" value="P:thiamine diphosphate biosynthetic process"/>
    <property type="evidence" value="ECO:0007669"/>
    <property type="project" value="UniProtKB-UniRule"/>
</dbReference>
<dbReference type="GO" id="GO:0006772">
    <property type="term" value="P:thiamine metabolic process"/>
    <property type="evidence" value="ECO:0007669"/>
    <property type="project" value="InterPro"/>
</dbReference>
<dbReference type="FunFam" id="3.90.1200.10:FF:000004">
    <property type="entry name" value="Thiamine kinase"/>
    <property type="match status" value="1"/>
</dbReference>
<dbReference type="Gene3D" id="3.90.1200.10">
    <property type="match status" value="1"/>
</dbReference>
<dbReference type="HAMAP" id="MF_01604">
    <property type="entry name" value="Thiamine_kinase"/>
    <property type="match status" value="1"/>
</dbReference>
<dbReference type="InterPro" id="IPR002575">
    <property type="entry name" value="Aminoglycoside_PTrfase"/>
</dbReference>
<dbReference type="InterPro" id="IPR011009">
    <property type="entry name" value="Kinase-like_dom_sf"/>
</dbReference>
<dbReference type="InterPro" id="IPR014093">
    <property type="entry name" value="Thiamine_kinase"/>
</dbReference>
<dbReference type="NCBIfam" id="NF007620">
    <property type="entry name" value="PRK10271.1"/>
    <property type="match status" value="1"/>
</dbReference>
<dbReference type="NCBIfam" id="TIGR02721">
    <property type="entry name" value="ycfN_thiK"/>
    <property type="match status" value="1"/>
</dbReference>
<dbReference type="Pfam" id="PF01636">
    <property type="entry name" value="APH"/>
    <property type="match status" value="1"/>
</dbReference>
<dbReference type="SUPFAM" id="SSF56112">
    <property type="entry name" value="Protein kinase-like (PK-like)"/>
    <property type="match status" value="1"/>
</dbReference>
<comment type="function">
    <text evidence="1">Catalyzes the ATP-dependent phosphorylation of thiamine to thiamine phosphate. Is involved in thiamine salvage.</text>
</comment>
<comment type="catalytic activity">
    <reaction evidence="1">
        <text>thiamine + ATP = thiamine phosphate + ADP + H(+)</text>
        <dbReference type="Rhea" id="RHEA:12012"/>
        <dbReference type="ChEBI" id="CHEBI:15378"/>
        <dbReference type="ChEBI" id="CHEBI:18385"/>
        <dbReference type="ChEBI" id="CHEBI:30616"/>
        <dbReference type="ChEBI" id="CHEBI:37575"/>
        <dbReference type="ChEBI" id="CHEBI:456216"/>
        <dbReference type="EC" id="2.7.1.89"/>
    </reaction>
    <physiologicalReaction direction="left-to-right" evidence="1">
        <dbReference type="Rhea" id="RHEA:12013"/>
    </physiologicalReaction>
</comment>
<comment type="pathway">
    <text evidence="1">Cofactor biosynthesis; thiamine diphosphate biosynthesis; thiamine phosphate from thiamine: step 1/1.</text>
</comment>
<comment type="similarity">
    <text evidence="1">Belongs to the thiamine kinase family.</text>
</comment>
<proteinExistence type="inferred from homology"/>
<gene>
    <name evidence="1" type="primary">thiK</name>
    <name type="ordered locus">SDY_2044</name>
</gene>
<evidence type="ECO:0000255" key="1">
    <source>
        <dbReference type="HAMAP-Rule" id="MF_01604"/>
    </source>
</evidence>
<reference key="1">
    <citation type="journal article" date="2005" name="Nucleic Acids Res.">
        <title>Genome dynamics and diversity of Shigella species, the etiologic agents of bacillary dysentery.</title>
        <authorList>
            <person name="Yang F."/>
            <person name="Yang J."/>
            <person name="Zhang X."/>
            <person name="Chen L."/>
            <person name="Jiang Y."/>
            <person name="Yan Y."/>
            <person name="Tang X."/>
            <person name="Wang J."/>
            <person name="Xiong Z."/>
            <person name="Dong J."/>
            <person name="Xue Y."/>
            <person name="Zhu Y."/>
            <person name="Xu X."/>
            <person name="Sun L."/>
            <person name="Chen S."/>
            <person name="Nie H."/>
            <person name="Peng J."/>
            <person name="Xu J."/>
            <person name="Wang Y."/>
            <person name="Yuan Z."/>
            <person name="Wen Y."/>
            <person name="Yao Z."/>
            <person name="Shen Y."/>
            <person name="Qiang B."/>
            <person name="Hou Y."/>
            <person name="Yu J."/>
            <person name="Jin Q."/>
        </authorList>
    </citation>
    <scope>NUCLEOTIDE SEQUENCE [LARGE SCALE GENOMIC DNA]</scope>
    <source>
        <strain>Sd197</strain>
    </source>
</reference>